<accession>B0S150</accession>
<proteinExistence type="inferred from homology"/>
<protein>
    <recommendedName>
        <fullName evidence="1">Large ribosomal subunit protein bL28</fullName>
    </recommendedName>
    <alternativeName>
        <fullName evidence="2">50S ribosomal protein L28</fullName>
    </alternativeName>
</protein>
<gene>
    <name evidence="1" type="primary">rpmB</name>
    <name type="ordered locus">FMG_0672</name>
</gene>
<comment type="similarity">
    <text evidence="1">Belongs to the bacterial ribosomal protein bL28 family.</text>
</comment>
<dbReference type="EMBL" id="AP008971">
    <property type="protein sequence ID" value="BAG08090.1"/>
    <property type="molecule type" value="Genomic_DNA"/>
</dbReference>
<dbReference type="RefSeq" id="WP_002836298.1">
    <property type="nucleotide sequence ID" value="NC_010376.1"/>
</dbReference>
<dbReference type="SMR" id="B0S150"/>
<dbReference type="STRING" id="334413.FMG_0672"/>
<dbReference type="GeneID" id="60840066"/>
<dbReference type="KEGG" id="fma:FMG_0672"/>
<dbReference type="eggNOG" id="COG0227">
    <property type="taxonomic scope" value="Bacteria"/>
</dbReference>
<dbReference type="HOGENOM" id="CLU_064548_7_0_9"/>
<dbReference type="Proteomes" id="UP000001319">
    <property type="component" value="Chromosome"/>
</dbReference>
<dbReference type="GO" id="GO:1990904">
    <property type="term" value="C:ribonucleoprotein complex"/>
    <property type="evidence" value="ECO:0007669"/>
    <property type="project" value="UniProtKB-KW"/>
</dbReference>
<dbReference type="GO" id="GO:0005840">
    <property type="term" value="C:ribosome"/>
    <property type="evidence" value="ECO:0007669"/>
    <property type="project" value="UniProtKB-KW"/>
</dbReference>
<dbReference type="GO" id="GO:0003735">
    <property type="term" value="F:structural constituent of ribosome"/>
    <property type="evidence" value="ECO:0007669"/>
    <property type="project" value="InterPro"/>
</dbReference>
<dbReference type="GO" id="GO:0006412">
    <property type="term" value="P:translation"/>
    <property type="evidence" value="ECO:0007669"/>
    <property type="project" value="UniProtKB-UniRule"/>
</dbReference>
<dbReference type="Gene3D" id="2.30.170.40">
    <property type="entry name" value="Ribosomal protein L28/L24"/>
    <property type="match status" value="1"/>
</dbReference>
<dbReference type="HAMAP" id="MF_00373">
    <property type="entry name" value="Ribosomal_bL28"/>
    <property type="match status" value="1"/>
</dbReference>
<dbReference type="InterPro" id="IPR050096">
    <property type="entry name" value="Bacterial_rp_bL28"/>
</dbReference>
<dbReference type="InterPro" id="IPR026569">
    <property type="entry name" value="Ribosomal_bL28"/>
</dbReference>
<dbReference type="InterPro" id="IPR034704">
    <property type="entry name" value="Ribosomal_bL28/bL31-like_sf"/>
</dbReference>
<dbReference type="InterPro" id="IPR001383">
    <property type="entry name" value="Ribosomal_bL28_bact-type"/>
</dbReference>
<dbReference type="InterPro" id="IPR037147">
    <property type="entry name" value="Ribosomal_bL28_sf"/>
</dbReference>
<dbReference type="NCBIfam" id="TIGR00009">
    <property type="entry name" value="L28"/>
    <property type="match status" value="1"/>
</dbReference>
<dbReference type="PANTHER" id="PTHR39080">
    <property type="entry name" value="50S RIBOSOMAL PROTEIN L28"/>
    <property type="match status" value="1"/>
</dbReference>
<dbReference type="PANTHER" id="PTHR39080:SF1">
    <property type="entry name" value="LARGE RIBOSOMAL SUBUNIT PROTEIN BL28A"/>
    <property type="match status" value="1"/>
</dbReference>
<dbReference type="Pfam" id="PF00830">
    <property type="entry name" value="Ribosomal_L28"/>
    <property type="match status" value="1"/>
</dbReference>
<dbReference type="SUPFAM" id="SSF143800">
    <property type="entry name" value="L28p-like"/>
    <property type="match status" value="1"/>
</dbReference>
<sequence length="71" mass="8172">MSKKCEICGKSRTFGNNRSFSLRSSNRSWAPNIRKVRALVDGKPKRINVCTRCLRSGLVERPQFIKTTEEE</sequence>
<evidence type="ECO:0000255" key="1">
    <source>
        <dbReference type="HAMAP-Rule" id="MF_00373"/>
    </source>
</evidence>
<evidence type="ECO:0000305" key="2"/>
<name>RL28_FINM2</name>
<keyword id="KW-1185">Reference proteome</keyword>
<keyword id="KW-0687">Ribonucleoprotein</keyword>
<keyword id="KW-0689">Ribosomal protein</keyword>
<reference key="1">
    <citation type="journal article" date="2008" name="DNA Res.">
        <title>Complete genome sequence of Finegoldia magna, an anaerobic opportunistic pathogen.</title>
        <authorList>
            <person name="Goto T."/>
            <person name="Yamashita A."/>
            <person name="Hirakawa H."/>
            <person name="Matsutani M."/>
            <person name="Todo K."/>
            <person name="Ohshima K."/>
            <person name="Toh H."/>
            <person name="Miyamoto K."/>
            <person name="Kuhara S."/>
            <person name="Hattori M."/>
            <person name="Shimizu T."/>
            <person name="Akimoto S."/>
        </authorList>
    </citation>
    <scope>NUCLEOTIDE SEQUENCE [LARGE SCALE GENOMIC DNA]</scope>
    <source>
        <strain>ATCC 29328 / DSM 20472 / WAL 2508</strain>
    </source>
</reference>
<organism>
    <name type="scientific">Finegoldia magna (strain ATCC 29328 / DSM 20472 / WAL 2508)</name>
    <name type="common">Peptostreptococcus magnus</name>
    <dbReference type="NCBI Taxonomy" id="334413"/>
    <lineage>
        <taxon>Bacteria</taxon>
        <taxon>Bacillati</taxon>
        <taxon>Bacillota</taxon>
        <taxon>Tissierellia</taxon>
        <taxon>Tissierellales</taxon>
        <taxon>Peptoniphilaceae</taxon>
        <taxon>Finegoldia</taxon>
    </lineage>
</organism>
<feature type="chain" id="PRO_1000195924" description="Large ribosomal subunit protein bL28">
    <location>
        <begin position="1"/>
        <end position="71"/>
    </location>
</feature>